<evidence type="ECO:0000255" key="1">
    <source>
        <dbReference type="HAMAP-Rule" id="MF_00193"/>
    </source>
</evidence>
<name>NADE_MYCA9</name>
<reference key="1">
    <citation type="journal article" date="2009" name="PLoS ONE">
        <title>Non mycobacterial virulence genes in the genome of the emerging pathogen Mycobacterium abscessus.</title>
        <authorList>
            <person name="Ripoll F."/>
            <person name="Pasek S."/>
            <person name="Schenowitz C."/>
            <person name="Dossat C."/>
            <person name="Barbe V."/>
            <person name="Rottman M."/>
            <person name="Macheras E."/>
            <person name="Heym B."/>
            <person name="Herrmann J.L."/>
            <person name="Daffe M."/>
            <person name="Brosch R."/>
            <person name="Risler J.L."/>
            <person name="Gaillard J.L."/>
        </authorList>
    </citation>
    <scope>NUCLEOTIDE SEQUENCE [LARGE SCALE GENOMIC DNA]</scope>
    <source>
        <strain>ATCC 19977 / DSM 44196 / CCUG 20993 / CIP 104536 / JCM 13569 / NCTC 13031 / TMC 1543 / L948</strain>
    </source>
</reference>
<gene>
    <name evidence="1" type="primary">nadE</name>
    <name type="ordered locus">MAB_3419</name>
</gene>
<organism>
    <name type="scientific">Mycobacteroides abscessus (strain ATCC 19977 / DSM 44196 / CCUG 20993 / CIP 104536 / JCM 13569 / NCTC 13031 / TMC 1543 / L948)</name>
    <name type="common">Mycobacterium abscessus</name>
    <dbReference type="NCBI Taxonomy" id="561007"/>
    <lineage>
        <taxon>Bacteria</taxon>
        <taxon>Bacillati</taxon>
        <taxon>Actinomycetota</taxon>
        <taxon>Actinomycetes</taxon>
        <taxon>Mycobacteriales</taxon>
        <taxon>Mycobacteriaceae</taxon>
        <taxon>Mycobacteroides</taxon>
        <taxon>Mycobacteroides abscessus</taxon>
    </lineage>
</organism>
<comment type="function">
    <text evidence="1">Catalyzes the ATP-dependent amidation of deamido-NAD to form NAD. Uses ammonia as a nitrogen source.</text>
</comment>
<comment type="catalytic activity">
    <reaction evidence="1">
        <text>deamido-NAD(+) + NH4(+) + ATP = AMP + diphosphate + NAD(+) + H(+)</text>
        <dbReference type="Rhea" id="RHEA:21188"/>
        <dbReference type="ChEBI" id="CHEBI:15378"/>
        <dbReference type="ChEBI" id="CHEBI:28938"/>
        <dbReference type="ChEBI" id="CHEBI:30616"/>
        <dbReference type="ChEBI" id="CHEBI:33019"/>
        <dbReference type="ChEBI" id="CHEBI:57540"/>
        <dbReference type="ChEBI" id="CHEBI:58437"/>
        <dbReference type="ChEBI" id="CHEBI:456215"/>
        <dbReference type="EC" id="6.3.1.5"/>
    </reaction>
</comment>
<comment type="pathway">
    <text evidence="1">Cofactor biosynthesis; NAD(+) biosynthesis; NAD(+) from deamido-NAD(+) (ammonia route): step 1/1.</text>
</comment>
<comment type="subunit">
    <text evidence="1">Homodimer.</text>
</comment>
<comment type="similarity">
    <text evidence="1">Belongs to the NAD synthetase family.</text>
</comment>
<feature type="chain" id="PRO_1000099034" description="NH(3)-dependent NAD(+) synthetase">
    <location>
        <begin position="1"/>
        <end position="273"/>
    </location>
</feature>
<feature type="binding site" evidence="1">
    <location>
        <begin position="46"/>
        <end position="53"/>
    </location>
    <ligand>
        <name>ATP</name>
        <dbReference type="ChEBI" id="CHEBI:30616"/>
    </ligand>
</feature>
<feature type="binding site" evidence="1">
    <location>
        <position position="52"/>
    </location>
    <ligand>
        <name>Mg(2+)</name>
        <dbReference type="ChEBI" id="CHEBI:18420"/>
    </ligand>
</feature>
<feature type="binding site" evidence="1">
    <location>
        <position position="139"/>
    </location>
    <ligand>
        <name>deamido-NAD(+)</name>
        <dbReference type="ChEBI" id="CHEBI:58437"/>
    </ligand>
</feature>
<feature type="binding site" evidence="1">
    <location>
        <position position="159"/>
    </location>
    <ligand>
        <name>ATP</name>
        <dbReference type="ChEBI" id="CHEBI:30616"/>
    </ligand>
</feature>
<feature type="binding site" evidence="1">
    <location>
        <position position="164"/>
    </location>
    <ligand>
        <name>Mg(2+)</name>
        <dbReference type="ChEBI" id="CHEBI:18420"/>
    </ligand>
</feature>
<feature type="binding site" evidence="1">
    <location>
        <position position="172"/>
    </location>
    <ligand>
        <name>deamido-NAD(+)</name>
        <dbReference type="ChEBI" id="CHEBI:58437"/>
    </ligand>
</feature>
<feature type="binding site" evidence="1">
    <location>
        <position position="179"/>
    </location>
    <ligand>
        <name>deamido-NAD(+)</name>
        <dbReference type="ChEBI" id="CHEBI:58437"/>
    </ligand>
</feature>
<feature type="binding site" evidence="1">
    <location>
        <position position="188"/>
    </location>
    <ligand>
        <name>ATP</name>
        <dbReference type="ChEBI" id="CHEBI:30616"/>
    </ligand>
</feature>
<feature type="binding site" evidence="1">
    <location>
        <position position="210"/>
    </location>
    <ligand>
        <name>ATP</name>
        <dbReference type="ChEBI" id="CHEBI:30616"/>
    </ligand>
</feature>
<feature type="binding site" evidence="1">
    <location>
        <begin position="259"/>
        <end position="260"/>
    </location>
    <ligand>
        <name>deamido-NAD(+)</name>
        <dbReference type="ChEBI" id="CHEBI:58437"/>
    </ligand>
</feature>
<protein>
    <recommendedName>
        <fullName evidence="1">NH(3)-dependent NAD(+) synthetase</fullName>
        <ecNumber evidence="1">6.3.1.5</ecNumber>
    </recommendedName>
</protein>
<dbReference type="EC" id="6.3.1.5" evidence="1"/>
<dbReference type="EMBL" id="CU458896">
    <property type="protein sequence ID" value="CAM63495.1"/>
    <property type="molecule type" value="Genomic_DNA"/>
</dbReference>
<dbReference type="RefSeq" id="WP_005081185.1">
    <property type="nucleotide sequence ID" value="NZ_MLCG01000001.1"/>
</dbReference>
<dbReference type="SMR" id="B1ME26"/>
<dbReference type="GeneID" id="93380356"/>
<dbReference type="KEGG" id="mab:MAB_3419"/>
<dbReference type="UniPathway" id="UPA00253">
    <property type="reaction ID" value="UER00333"/>
</dbReference>
<dbReference type="Proteomes" id="UP000007137">
    <property type="component" value="Chromosome"/>
</dbReference>
<dbReference type="GO" id="GO:0005737">
    <property type="term" value="C:cytoplasm"/>
    <property type="evidence" value="ECO:0007669"/>
    <property type="project" value="InterPro"/>
</dbReference>
<dbReference type="GO" id="GO:0005524">
    <property type="term" value="F:ATP binding"/>
    <property type="evidence" value="ECO:0007669"/>
    <property type="project" value="UniProtKB-UniRule"/>
</dbReference>
<dbReference type="GO" id="GO:0004359">
    <property type="term" value="F:glutaminase activity"/>
    <property type="evidence" value="ECO:0007669"/>
    <property type="project" value="InterPro"/>
</dbReference>
<dbReference type="GO" id="GO:0046872">
    <property type="term" value="F:metal ion binding"/>
    <property type="evidence" value="ECO:0007669"/>
    <property type="project" value="UniProtKB-KW"/>
</dbReference>
<dbReference type="GO" id="GO:0003952">
    <property type="term" value="F:NAD+ synthase (glutamine-hydrolyzing) activity"/>
    <property type="evidence" value="ECO:0007669"/>
    <property type="project" value="InterPro"/>
</dbReference>
<dbReference type="GO" id="GO:0008795">
    <property type="term" value="F:NAD+ synthase activity"/>
    <property type="evidence" value="ECO:0007669"/>
    <property type="project" value="UniProtKB-UniRule"/>
</dbReference>
<dbReference type="GO" id="GO:0009435">
    <property type="term" value="P:NAD biosynthetic process"/>
    <property type="evidence" value="ECO:0007669"/>
    <property type="project" value="UniProtKB-UniRule"/>
</dbReference>
<dbReference type="CDD" id="cd00553">
    <property type="entry name" value="NAD_synthase"/>
    <property type="match status" value="1"/>
</dbReference>
<dbReference type="FunFam" id="3.40.50.620:FF:000015">
    <property type="entry name" value="NH(3)-dependent NAD(+) synthetase"/>
    <property type="match status" value="1"/>
</dbReference>
<dbReference type="Gene3D" id="3.40.50.620">
    <property type="entry name" value="HUPs"/>
    <property type="match status" value="1"/>
</dbReference>
<dbReference type="HAMAP" id="MF_00193">
    <property type="entry name" value="NadE_ammonia_dep"/>
    <property type="match status" value="1"/>
</dbReference>
<dbReference type="InterPro" id="IPR022310">
    <property type="entry name" value="NAD/GMP_synthase"/>
</dbReference>
<dbReference type="InterPro" id="IPR003694">
    <property type="entry name" value="NAD_synthase"/>
</dbReference>
<dbReference type="InterPro" id="IPR022926">
    <property type="entry name" value="NH(3)-dep_NAD(+)_synth"/>
</dbReference>
<dbReference type="InterPro" id="IPR014729">
    <property type="entry name" value="Rossmann-like_a/b/a_fold"/>
</dbReference>
<dbReference type="NCBIfam" id="TIGR00552">
    <property type="entry name" value="nadE"/>
    <property type="match status" value="1"/>
</dbReference>
<dbReference type="NCBIfam" id="NF001979">
    <property type="entry name" value="PRK00768.1"/>
    <property type="match status" value="1"/>
</dbReference>
<dbReference type="PANTHER" id="PTHR23090">
    <property type="entry name" value="NH 3 /GLUTAMINE-DEPENDENT NAD + SYNTHETASE"/>
    <property type="match status" value="1"/>
</dbReference>
<dbReference type="PANTHER" id="PTHR23090:SF7">
    <property type="entry name" value="NH(3)-DEPENDENT NAD(+) SYNTHETASE"/>
    <property type="match status" value="1"/>
</dbReference>
<dbReference type="Pfam" id="PF02540">
    <property type="entry name" value="NAD_synthase"/>
    <property type="match status" value="1"/>
</dbReference>
<dbReference type="SUPFAM" id="SSF52402">
    <property type="entry name" value="Adenine nucleotide alpha hydrolases-like"/>
    <property type="match status" value="1"/>
</dbReference>
<proteinExistence type="inferred from homology"/>
<keyword id="KW-0067">ATP-binding</keyword>
<keyword id="KW-0436">Ligase</keyword>
<keyword id="KW-0460">Magnesium</keyword>
<keyword id="KW-0479">Metal-binding</keyword>
<keyword id="KW-0520">NAD</keyword>
<keyword id="KW-0547">Nucleotide-binding</keyword>
<keyword id="KW-1185">Reference proteome</keyword>
<accession>B1ME26</accession>
<sequence length="273" mass="29586">MSSLREEIRSALDVSPTIDPAAEVSRRVGFLKDYLRASSTKGFVLGISGGQDSALAGRLCQLAAQESRLEGVAAEFIAVRLPYGVQADEEDAQVALRFIDPDRTIVINIKETSDAATKAVAEALGETPTDFVRGNIKARERMVVQYAAAGQHRLLVVGTDHAAEAVTGFFTKFGDGGVDVTPLTGLTKRQGAQILSHLGAPDSISHKVPTADLEDDRPALPDEVALGVTYAQIDDYLEGKAVTVEAADRIERWYLQTRHKRAQPVTPFDGWWR</sequence>